<proteinExistence type="inferred from homology"/>
<protein>
    <recommendedName>
        <fullName evidence="1">D-aminoacyl-tRNA deacylase</fullName>
        <shortName evidence="1">DTD</shortName>
        <ecNumber evidence="1">3.1.1.96</ecNumber>
    </recommendedName>
    <alternativeName>
        <fullName evidence="1">Gly-tRNA(Ala) deacylase</fullName>
    </alternativeName>
</protein>
<evidence type="ECO:0000255" key="1">
    <source>
        <dbReference type="HAMAP-Rule" id="MF_00518"/>
    </source>
</evidence>
<comment type="function">
    <text evidence="1">An aminoacyl-tRNA editing enzyme that deacylates mischarged D-aminoacyl-tRNAs. Also deacylates mischarged glycyl-tRNA(Ala), protecting cells against glycine mischarging by AlaRS. Acts via tRNA-based rather than protein-based catalysis; rejects L-amino acids rather than detecting D-amino acids in the active site. By recycling D-aminoacyl-tRNA to D-amino acids and free tRNA molecules, this enzyme counteracts the toxicity associated with the formation of D-aminoacyl-tRNA entities in vivo and helps enforce protein L-homochirality.</text>
</comment>
<comment type="catalytic activity">
    <reaction evidence="1">
        <text>glycyl-tRNA(Ala) + H2O = tRNA(Ala) + glycine + H(+)</text>
        <dbReference type="Rhea" id="RHEA:53744"/>
        <dbReference type="Rhea" id="RHEA-COMP:9657"/>
        <dbReference type="Rhea" id="RHEA-COMP:13640"/>
        <dbReference type="ChEBI" id="CHEBI:15377"/>
        <dbReference type="ChEBI" id="CHEBI:15378"/>
        <dbReference type="ChEBI" id="CHEBI:57305"/>
        <dbReference type="ChEBI" id="CHEBI:78442"/>
        <dbReference type="ChEBI" id="CHEBI:78522"/>
        <dbReference type="EC" id="3.1.1.96"/>
    </reaction>
</comment>
<comment type="catalytic activity">
    <reaction evidence="1">
        <text>a D-aminoacyl-tRNA + H2O = a tRNA + a D-alpha-amino acid + H(+)</text>
        <dbReference type="Rhea" id="RHEA:13953"/>
        <dbReference type="Rhea" id="RHEA-COMP:10123"/>
        <dbReference type="Rhea" id="RHEA-COMP:10124"/>
        <dbReference type="ChEBI" id="CHEBI:15377"/>
        <dbReference type="ChEBI" id="CHEBI:15378"/>
        <dbReference type="ChEBI" id="CHEBI:59871"/>
        <dbReference type="ChEBI" id="CHEBI:78442"/>
        <dbReference type="ChEBI" id="CHEBI:79333"/>
        <dbReference type="EC" id="3.1.1.96"/>
    </reaction>
</comment>
<comment type="subunit">
    <text evidence="1">Homodimer.</text>
</comment>
<comment type="subcellular location">
    <subcellularLocation>
        <location evidence="1">Cytoplasm</location>
    </subcellularLocation>
</comment>
<comment type="domain">
    <text evidence="1">A Gly-cisPro motif from one monomer fits into the active site of the other monomer to allow specific chiral rejection of L-amino acids.</text>
</comment>
<comment type="similarity">
    <text evidence="1">Belongs to the DTD family.</text>
</comment>
<reference key="1">
    <citation type="journal article" date="2004" name="Nat. Genet.">
        <title>Evidence in the Legionella pneumophila genome for exploitation of host cell functions and high genome plasticity.</title>
        <authorList>
            <person name="Cazalet C."/>
            <person name="Rusniok C."/>
            <person name="Brueggemann H."/>
            <person name="Zidane N."/>
            <person name="Magnier A."/>
            <person name="Ma L."/>
            <person name="Tichit M."/>
            <person name="Jarraud S."/>
            <person name="Bouchier C."/>
            <person name="Vandenesch F."/>
            <person name="Kunst F."/>
            <person name="Etienne J."/>
            <person name="Glaser P."/>
            <person name="Buchrieser C."/>
        </authorList>
    </citation>
    <scope>NUCLEOTIDE SEQUENCE [LARGE SCALE GENOMIC DNA]</scope>
    <source>
        <strain>Lens</strain>
    </source>
</reference>
<keyword id="KW-0963">Cytoplasm</keyword>
<keyword id="KW-0378">Hydrolase</keyword>
<keyword id="KW-0694">RNA-binding</keyword>
<keyword id="KW-0820">tRNA-binding</keyword>
<accession>Q5WVK6</accession>
<sequence>MLTVLQRVKEARVDIDGQTVGKINHGLLILCGFEPNDSLENIKRMLDKCINYRIFEDPSGKMNLSLKDVNGGLLLVPQFTLMADTQKGLRPSFSNAASPELGRELFDNLLTLAQKCHQNTQSGCFGANMQVYLCNDGPVTFLLQF</sequence>
<gene>
    <name evidence="1" type="primary">dtd</name>
    <name type="ordered locus">lpl1809</name>
</gene>
<name>DTD_LEGPL</name>
<feature type="chain" id="PRO_0000164554" description="D-aminoacyl-tRNA deacylase">
    <location>
        <begin position="1"/>
        <end position="145"/>
    </location>
</feature>
<feature type="short sequence motif" description="Gly-cisPro motif, important for rejection of L-amino acids" evidence="1">
    <location>
        <begin position="137"/>
        <end position="138"/>
    </location>
</feature>
<organism>
    <name type="scientific">Legionella pneumophila (strain Lens)</name>
    <dbReference type="NCBI Taxonomy" id="297245"/>
    <lineage>
        <taxon>Bacteria</taxon>
        <taxon>Pseudomonadati</taxon>
        <taxon>Pseudomonadota</taxon>
        <taxon>Gammaproteobacteria</taxon>
        <taxon>Legionellales</taxon>
        <taxon>Legionellaceae</taxon>
        <taxon>Legionella</taxon>
    </lineage>
</organism>
<dbReference type="EC" id="3.1.1.96" evidence="1"/>
<dbReference type="EMBL" id="CR628337">
    <property type="protein sequence ID" value="CAH16048.1"/>
    <property type="molecule type" value="Genomic_DNA"/>
</dbReference>
<dbReference type="RefSeq" id="WP_011215812.1">
    <property type="nucleotide sequence ID" value="NC_006369.1"/>
</dbReference>
<dbReference type="SMR" id="Q5WVK6"/>
<dbReference type="KEGG" id="lpf:lpl1809"/>
<dbReference type="LegioList" id="lpl1809"/>
<dbReference type="HOGENOM" id="CLU_076901_1_0_6"/>
<dbReference type="Proteomes" id="UP000002517">
    <property type="component" value="Chromosome"/>
</dbReference>
<dbReference type="GO" id="GO:0005737">
    <property type="term" value="C:cytoplasm"/>
    <property type="evidence" value="ECO:0007669"/>
    <property type="project" value="UniProtKB-SubCell"/>
</dbReference>
<dbReference type="GO" id="GO:0051500">
    <property type="term" value="F:D-tyrosyl-tRNA(Tyr) deacylase activity"/>
    <property type="evidence" value="ECO:0007669"/>
    <property type="project" value="TreeGrafter"/>
</dbReference>
<dbReference type="GO" id="GO:0106026">
    <property type="term" value="F:Gly-tRNA(Ala) deacylase activity"/>
    <property type="evidence" value="ECO:0007669"/>
    <property type="project" value="UniProtKB-UniRule"/>
</dbReference>
<dbReference type="GO" id="GO:0043908">
    <property type="term" value="F:Ser(Gly)-tRNA(Ala) hydrolase activity"/>
    <property type="evidence" value="ECO:0007669"/>
    <property type="project" value="UniProtKB-UniRule"/>
</dbReference>
<dbReference type="GO" id="GO:0000049">
    <property type="term" value="F:tRNA binding"/>
    <property type="evidence" value="ECO:0007669"/>
    <property type="project" value="UniProtKB-UniRule"/>
</dbReference>
<dbReference type="GO" id="GO:0019478">
    <property type="term" value="P:D-amino acid catabolic process"/>
    <property type="evidence" value="ECO:0007669"/>
    <property type="project" value="UniProtKB-UniRule"/>
</dbReference>
<dbReference type="FunFam" id="3.50.80.10:FF:000001">
    <property type="entry name" value="D-aminoacyl-tRNA deacylase"/>
    <property type="match status" value="1"/>
</dbReference>
<dbReference type="Gene3D" id="3.50.80.10">
    <property type="entry name" value="D-tyrosyl-tRNA(Tyr) deacylase"/>
    <property type="match status" value="1"/>
</dbReference>
<dbReference type="HAMAP" id="MF_00518">
    <property type="entry name" value="Deacylase_Dtd"/>
    <property type="match status" value="1"/>
</dbReference>
<dbReference type="InterPro" id="IPR003732">
    <property type="entry name" value="Daa-tRNA_deacyls_DTD"/>
</dbReference>
<dbReference type="InterPro" id="IPR023509">
    <property type="entry name" value="DTD-like_sf"/>
</dbReference>
<dbReference type="NCBIfam" id="TIGR00256">
    <property type="entry name" value="D-aminoacyl-tRNA deacylase"/>
    <property type="match status" value="1"/>
</dbReference>
<dbReference type="PANTHER" id="PTHR10472:SF5">
    <property type="entry name" value="D-AMINOACYL-TRNA DEACYLASE 1"/>
    <property type="match status" value="1"/>
</dbReference>
<dbReference type="PANTHER" id="PTHR10472">
    <property type="entry name" value="D-TYROSYL-TRNA TYR DEACYLASE"/>
    <property type="match status" value="1"/>
</dbReference>
<dbReference type="Pfam" id="PF02580">
    <property type="entry name" value="Tyr_Deacylase"/>
    <property type="match status" value="1"/>
</dbReference>
<dbReference type="SUPFAM" id="SSF69500">
    <property type="entry name" value="DTD-like"/>
    <property type="match status" value="1"/>
</dbReference>